<organism>
    <name type="scientific">Methanopyrus kandleri (strain AV19 / DSM 6324 / JCM 9639 / NBRC 100938)</name>
    <dbReference type="NCBI Taxonomy" id="190192"/>
    <lineage>
        <taxon>Archaea</taxon>
        <taxon>Methanobacteriati</taxon>
        <taxon>Methanobacteriota</taxon>
        <taxon>Methanomada group</taxon>
        <taxon>Methanopyri</taxon>
        <taxon>Methanopyrales</taxon>
        <taxon>Methanopyraceae</taxon>
        <taxon>Methanopyrus</taxon>
    </lineage>
</organism>
<name>TPIS_METKA</name>
<protein>
    <recommendedName>
        <fullName evidence="1">Triosephosphate isomerase</fullName>
        <shortName evidence="1">TIM</shortName>
        <shortName evidence="1">TPI</shortName>
        <ecNumber evidence="1">5.3.1.1</ecNumber>
    </recommendedName>
    <alternativeName>
        <fullName evidence="1">Triose-phosphate isomerase</fullName>
    </alternativeName>
</protein>
<reference key="1">
    <citation type="journal article" date="2002" name="Proc. Natl. Acad. Sci. U.S.A.">
        <title>The complete genome of hyperthermophile Methanopyrus kandleri AV19 and monophyly of archaeal methanogens.</title>
        <authorList>
            <person name="Slesarev A.I."/>
            <person name="Mezhevaya K.V."/>
            <person name="Makarova K.S."/>
            <person name="Polushin N.N."/>
            <person name="Shcherbinina O.V."/>
            <person name="Shakhova V.V."/>
            <person name="Belova G.I."/>
            <person name="Aravind L."/>
            <person name="Natale D.A."/>
            <person name="Rogozin I.B."/>
            <person name="Tatusov R.L."/>
            <person name="Wolf Y.I."/>
            <person name="Stetter K.O."/>
            <person name="Malykh A.G."/>
            <person name="Koonin E.V."/>
            <person name="Kozyavkin S.A."/>
        </authorList>
    </citation>
    <scope>NUCLEOTIDE SEQUENCE [LARGE SCALE GENOMIC DNA]</scope>
    <source>
        <strain>AV19 / DSM 6324 / JCM 9639 / NBRC 100938</strain>
    </source>
</reference>
<dbReference type="EC" id="5.3.1.1" evidence="1"/>
<dbReference type="EMBL" id="AE009439">
    <property type="protein sequence ID" value="AAM02877.1"/>
    <property type="molecule type" value="Genomic_DNA"/>
</dbReference>
<dbReference type="RefSeq" id="WP_011020032.1">
    <property type="nucleotide sequence ID" value="NC_003551.1"/>
</dbReference>
<dbReference type="SMR" id="Q8TUT9"/>
<dbReference type="FunCoup" id="Q8TUT9">
    <property type="interactions" value="237"/>
</dbReference>
<dbReference type="STRING" id="190192.MK1664"/>
<dbReference type="PaxDb" id="190192-MK1664"/>
<dbReference type="EnsemblBacteria" id="AAM02877">
    <property type="protein sequence ID" value="AAM02877"/>
    <property type="gene ID" value="MK1664"/>
</dbReference>
<dbReference type="GeneID" id="1478259"/>
<dbReference type="KEGG" id="mka:MK1664"/>
<dbReference type="PATRIC" id="fig|190192.8.peg.1828"/>
<dbReference type="HOGENOM" id="CLU_104921_0_0_2"/>
<dbReference type="InParanoid" id="Q8TUT9"/>
<dbReference type="OrthoDB" id="9465at2157"/>
<dbReference type="UniPathway" id="UPA00109">
    <property type="reaction ID" value="UER00189"/>
</dbReference>
<dbReference type="UniPathway" id="UPA00138"/>
<dbReference type="Proteomes" id="UP000001826">
    <property type="component" value="Chromosome"/>
</dbReference>
<dbReference type="GO" id="GO:0005829">
    <property type="term" value="C:cytosol"/>
    <property type="evidence" value="ECO:0007669"/>
    <property type="project" value="TreeGrafter"/>
</dbReference>
<dbReference type="GO" id="GO:0004807">
    <property type="term" value="F:triose-phosphate isomerase activity"/>
    <property type="evidence" value="ECO:0007669"/>
    <property type="project" value="UniProtKB-UniRule"/>
</dbReference>
<dbReference type="GO" id="GO:0006094">
    <property type="term" value="P:gluconeogenesis"/>
    <property type="evidence" value="ECO:0007669"/>
    <property type="project" value="UniProtKB-UniRule"/>
</dbReference>
<dbReference type="GO" id="GO:0046166">
    <property type="term" value="P:glyceraldehyde-3-phosphate biosynthetic process"/>
    <property type="evidence" value="ECO:0007669"/>
    <property type="project" value="TreeGrafter"/>
</dbReference>
<dbReference type="GO" id="GO:0019563">
    <property type="term" value="P:glycerol catabolic process"/>
    <property type="evidence" value="ECO:0007669"/>
    <property type="project" value="TreeGrafter"/>
</dbReference>
<dbReference type="GO" id="GO:0006096">
    <property type="term" value="P:glycolytic process"/>
    <property type="evidence" value="ECO:0007669"/>
    <property type="project" value="UniProtKB-UniRule"/>
</dbReference>
<dbReference type="CDD" id="cd00311">
    <property type="entry name" value="TIM"/>
    <property type="match status" value="1"/>
</dbReference>
<dbReference type="Gene3D" id="3.20.20.70">
    <property type="entry name" value="Aldolase class I"/>
    <property type="match status" value="1"/>
</dbReference>
<dbReference type="HAMAP" id="MF_00147_A">
    <property type="entry name" value="TIM_A"/>
    <property type="match status" value="1"/>
</dbReference>
<dbReference type="InterPro" id="IPR013785">
    <property type="entry name" value="Aldolase_TIM"/>
</dbReference>
<dbReference type="InterPro" id="IPR035990">
    <property type="entry name" value="TIM_sf"/>
</dbReference>
<dbReference type="InterPro" id="IPR000652">
    <property type="entry name" value="Triosephosphate_isomerase"/>
</dbReference>
<dbReference type="InterPro" id="IPR022891">
    <property type="entry name" value="Triosephosphate_isomerase_arc"/>
</dbReference>
<dbReference type="InterPro" id="IPR020861">
    <property type="entry name" value="Triosephosphate_isomerase_AS"/>
</dbReference>
<dbReference type="NCBIfam" id="NF003302">
    <property type="entry name" value="PRK04302.1"/>
    <property type="match status" value="1"/>
</dbReference>
<dbReference type="NCBIfam" id="TIGR00419">
    <property type="entry name" value="tim"/>
    <property type="match status" value="1"/>
</dbReference>
<dbReference type="PANTHER" id="PTHR21139">
    <property type="entry name" value="TRIOSEPHOSPHATE ISOMERASE"/>
    <property type="match status" value="1"/>
</dbReference>
<dbReference type="PANTHER" id="PTHR21139:SF42">
    <property type="entry name" value="TRIOSEPHOSPHATE ISOMERASE"/>
    <property type="match status" value="1"/>
</dbReference>
<dbReference type="Pfam" id="PF00121">
    <property type="entry name" value="TIM"/>
    <property type="match status" value="1"/>
</dbReference>
<dbReference type="SUPFAM" id="SSF51351">
    <property type="entry name" value="Triosephosphate isomerase (TIM)"/>
    <property type="match status" value="1"/>
</dbReference>
<dbReference type="PROSITE" id="PS00171">
    <property type="entry name" value="TIM_1"/>
    <property type="match status" value="1"/>
</dbReference>
<dbReference type="PROSITE" id="PS51440">
    <property type="entry name" value="TIM_2"/>
    <property type="match status" value="1"/>
</dbReference>
<accession>Q8TUT9</accession>
<comment type="function">
    <text evidence="1">Involved in the gluconeogenesis. Catalyzes stereospecifically the conversion of dihydroxyacetone phosphate (DHAP) to D-glyceraldehyde-3-phosphate (G3P).</text>
</comment>
<comment type="catalytic activity">
    <reaction evidence="1">
        <text>D-glyceraldehyde 3-phosphate = dihydroxyacetone phosphate</text>
        <dbReference type="Rhea" id="RHEA:18585"/>
        <dbReference type="ChEBI" id="CHEBI:57642"/>
        <dbReference type="ChEBI" id="CHEBI:59776"/>
        <dbReference type="EC" id="5.3.1.1"/>
    </reaction>
</comment>
<comment type="pathway">
    <text evidence="1">Carbohydrate biosynthesis; gluconeogenesis.</text>
</comment>
<comment type="pathway">
    <text evidence="1">Carbohydrate degradation; glycolysis; D-glyceraldehyde 3-phosphate from glycerone phosphate: step 1/1.</text>
</comment>
<comment type="subunit">
    <text evidence="1">Homotetramer; dimer of dimers.</text>
</comment>
<comment type="subcellular location">
    <subcellularLocation>
        <location evidence="1">Cytoplasm</location>
    </subcellularLocation>
</comment>
<comment type="similarity">
    <text evidence="1">Belongs to the triosephosphate isomerase family.</text>
</comment>
<proteinExistence type="inferred from homology"/>
<feature type="chain" id="PRO_0000090336" description="Triosephosphate isomerase">
    <location>
        <begin position="1"/>
        <end position="226"/>
    </location>
</feature>
<feature type="active site" description="Electrophile" evidence="1">
    <location>
        <position position="96"/>
    </location>
</feature>
<feature type="active site" description="Proton acceptor" evidence="1">
    <location>
        <position position="144"/>
    </location>
</feature>
<feature type="binding site" evidence="1">
    <location>
        <begin position="10"/>
        <end position="12"/>
    </location>
    <ligand>
        <name>substrate</name>
    </ligand>
</feature>
<feature type="binding site" evidence="1">
    <location>
        <position position="149"/>
    </location>
    <ligand>
        <name>substrate</name>
    </ligand>
</feature>
<feature type="binding site" evidence="1">
    <location>
        <position position="184"/>
    </location>
    <ligand>
        <name>substrate</name>
    </ligand>
</feature>
<feature type="binding site" evidence="1">
    <location>
        <begin position="205"/>
        <end position="206"/>
    </location>
    <ligand>
        <name>substrate</name>
    </ligand>
</feature>
<keyword id="KW-0963">Cytoplasm</keyword>
<keyword id="KW-0312">Gluconeogenesis</keyword>
<keyword id="KW-0324">Glycolysis</keyword>
<keyword id="KW-0413">Isomerase</keyword>
<keyword id="KW-1185">Reference proteome</keyword>
<evidence type="ECO:0000255" key="1">
    <source>
        <dbReference type="HAMAP-Rule" id="MF_00147"/>
    </source>
</evidence>
<gene>
    <name evidence="1" type="primary">tpiA</name>
    <name type="ordered locus">MK1664</name>
</gene>
<sequence>MLRVPPVIVNFKAYSEAVGENALRLARVAAEVSEETGVEVGICPPHVDLRDVVREVGDEVTVLAQAVDAAEPGGRTGHVTPEMVVEAGADGTLLNHSERRMLLEDLKDVCRACINEGLLTIVCASDALAARAAGALSPHAVAVEPPELIGTGTPVSKADPEVVERSVEVVKEVSEETAVLCGAGITDGSDVRAAVELGADGVLVASGVVLADDPKEALLDLISGLE</sequence>